<gene>
    <name evidence="1" type="primary">hemL</name>
    <name type="ordered locus">Abu_1006</name>
</gene>
<reference key="1">
    <citation type="journal article" date="2007" name="PLoS ONE">
        <title>The complete genome sequence and analysis of the Epsilonproteobacterium Arcobacter butzleri.</title>
        <authorList>
            <person name="Miller W.G."/>
            <person name="Parker C.T."/>
            <person name="Rubenfield M."/>
            <person name="Mendz G.L."/>
            <person name="Woesten M.M.S.M."/>
            <person name="Ussery D.W."/>
            <person name="Stolz J.F."/>
            <person name="Binnewies T.T."/>
            <person name="Hallin P.F."/>
            <person name="Wang G."/>
            <person name="Malek J.A."/>
            <person name="Rogosin A."/>
            <person name="Stanker L.H."/>
            <person name="Mandrell R.E."/>
        </authorList>
    </citation>
    <scope>NUCLEOTIDE SEQUENCE [LARGE SCALE GENOMIC DNA]</scope>
    <source>
        <strain>RM4018</strain>
    </source>
</reference>
<organism>
    <name type="scientific">Aliarcobacter butzleri (strain RM4018)</name>
    <name type="common">Arcobacter butzleri</name>
    <dbReference type="NCBI Taxonomy" id="367737"/>
    <lineage>
        <taxon>Bacteria</taxon>
        <taxon>Pseudomonadati</taxon>
        <taxon>Campylobacterota</taxon>
        <taxon>Epsilonproteobacteria</taxon>
        <taxon>Campylobacterales</taxon>
        <taxon>Arcobacteraceae</taxon>
        <taxon>Aliarcobacter</taxon>
    </lineage>
</organism>
<comment type="catalytic activity">
    <reaction evidence="1">
        <text>(S)-4-amino-5-oxopentanoate = 5-aminolevulinate</text>
        <dbReference type="Rhea" id="RHEA:14265"/>
        <dbReference type="ChEBI" id="CHEBI:57501"/>
        <dbReference type="ChEBI" id="CHEBI:356416"/>
        <dbReference type="EC" id="5.4.3.8"/>
    </reaction>
</comment>
<comment type="cofactor">
    <cofactor evidence="1">
        <name>pyridoxal 5'-phosphate</name>
        <dbReference type="ChEBI" id="CHEBI:597326"/>
    </cofactor>
</comment>
<comment type="pathway">
    <text evidence="1">Porphyrin-containing compound metabolism; protoporphyrin-IX biosynthesis; 5-aminolevulinate from L-glutamyl-tRNA(Glu): step 2/2.</text>
</comment>
<comment type="subunit">
    <text evidence="1">Homodimer.</text>
</comment>
<comment type="subcellular location">
    <subcellularLocation>
        <location evidence="1">Cytoplasm</location>
    </subcellularLocation>
</comment>
<comment type="similarity">
    <text evidence="1">Belongs to the class-III pyridoxal-phosphate-dependent aminotransferase family. HemL subfamily.</text>
</comment>
<dbReference type="EC" id="5.4.3.8" evidence="1"/>
<dbReference type="EMBL" id="CP000361">
    <property type="protein sequence ID" value="ABV67266.1"/>
    <property type="molecule type" value="Genomic_DNA"/>
</dbReference>
<dbReference type="RefSeq" id="WP_012012721.1">
    <property type="nucleotide sequence ID" value="NC_009850.1"/>
</dbReference>
<dbReference type="SMR" id="A8ETJ2"/>
<dbReference type="STRING" id="367737.Abu_1006"/>
<dbReference type="GeneID" id="24304748"/>
<dbReference type="KEGG" id="abu:Abu_1006"/>
<dbReference type="eggNOG" id="COG0001">
    <property type="taxonomic scope" value="Bacteria"/>
</dbReference>
<dbReference type="HOGENOM" id="CLU_016922_1_5_7"/>
<dbReference type="UniPathway" id="UPA00251">
    <property type="reaction ID" value="UER00317"/>
</dbReference>
<dbReference type="Proteomes" id="UP000001136">
    <property type="component" value="Chromosome"/>
</dbReference>
<dbReference type="GO" id="GO:0005737">
    <property type="term" value="C:cytoplasm"/>
    <property type="evidence" value="ECO:0007669"/>
    <property type="project" value="UniProtKB-SubCell"/>
</dbReference>
<dbReference type="GO" id="GO:0042286">
    <property type="term" value="F:glutamate-1-semialdehyde 2,1-aminomutase activity"/>
    <property type="evidence" value="ECO:0007669"/>
    <property type="project" value="UniProtKB-UniRule"/>
</dbReference>
<dbReference type="GO" id="GO:0030170">
    <property type="term" value="F:pyridoxal phosphate binding"/>
    <property type="evidence" value="ECO:0007669"/>
    <property type="project" value="InterPro"/>
</dbReference>
<dbReference type="GO" id="GO:0008483">
    <property type="term" value="F:transaminase activity"/>
    <property type="evidence" value="ECO:0007669"/>
    <property type="project" value="InterPro"/>
</dbReference>
<dbReference type="GO" id="GO:0006782">
    <property type="term" value="P:protoporphyrinogen IX biosynthetic process"/>
    <property type="evidence" value="ECO:0007669"/>
    <property type="project" value="UniProtKB-UniRule"/>
</dbReference>
<dbReference type="CDD" id="cd00610">
    <property type="entry name" value="OAT_like"/>
    <property type="match status" value="1"/>
</dbReference>
<dbReference type="FunFam" id="3.40.640.10:FF:000021">
    <property type="entry name" value="Glutamate-1-semialdehyde 2,1-aminomutase"/>
    <property type="match status" value="1"/>
</dbReference>
<dbReference type="Gene3D" id="3.90.1150.10">
    <property type="entry name" value="Aspartate Aminotransferase, domain 1"/>
    <property type="match status" value="1"/>
</dbReference>
<dbReference type="Gene3D" id="3.40.640.10">
    <property type="entry name" value="Type I PLP-dependent aspartate aminotransferase-like (Major domain)"/>
    <property type="match status" value="1"/>
</dbReference>
<dbReference type="HAMAP" id="MF_00375">
    <property type="entry name" value="HemL_aminotrans_3"/>
    <property type="match status" value="1"/>
</dbReference>
<dbReference type="InterPro" id="IPR004639">
    <property type="entry name" value="4pyrrol_synth_GluAld_NH2Trfase"/>
</dbReference>
<dbReference type="InterPro" id="IPR005814">
    <property type="entry name" value="Aminotrans_3"/>
</dbReference>
<dbReference type="InterPro" id="IPR049704">
    <property type="entry name" value="Aminotrans_3_PPA_site"/>
</dbReference>
<dbReference type="InterPro" id="IPR015424">
    <property type="entry name" value="PyrdxlP-dep_Trfase"/>
</dbReference>
<dbReference type="InterPro" id="IPR015421">
    <property type="entry name" value="PyrdxlP-dep_Trfase_major"/>
</dbReference>
<dbReference type="InterPro" id="IPR015422">
    <property type="entry name" value="PyrdxlP-dep_Trfase_small"/>
</dbReference>
<dbReference type="NCBIfam" id="TIGR00713">
    <property type="entry name" value="hemL"/>
    <property type="match status" value="1"/>
</dbReference>
<dbReference type="NCBIfam" id="NF000818">
    <property type="entry name" value="PRK00062.1"/>
    <property type="match status" value="1"/>
</dbReference>
<dbReference type="PANTHER" id="PTHR43713">
    <property type="entry name" value="GLUTAMATE-1-SEMIALDEHYDE 2,1-AMINOMUTASE"/>
    <property type="match status" value="1"/>
</dbReference>
<dbReference type="PANTHER" id="PTHR43713:SF3">
    <property type="entry name" value="GLUTAMATE-1-SEMIALDEHYDE 2,1-AMINOMUTASE 1, CHLOROPLASTIC-RELATED"/>
    <property type="match status" value="1"/>
</dbReference>
<dbReference type="Pfam" id="PF00202">
    <property type="entry name" value="Aminotran_3"/>
    <property type="match status" value="1"/>
</dbReference>
<dbReference type="SUPFAM" id="SSF53383">
    <property type="entry name" value="PLP-dependent transferases"/>
    <property type="match status" value="1"/>
</dbReference>
<dbReference type="PROSITE" id="PS00600">
    <property type="entry name" value="AA_TRANSFER_CLASS_3"/>
    <property type="match status" value="1"/>
</dbReference>
<feature type="chain" id="PRO_0000382252" description="Glutamate-1-semialdehyde 2,1-aminomutase">
    <location>
        <begin position="1"/>
        <end position="426"/>
    </location>
</feature>
<feature type="modified residue" description="N6-(pyridoxal phosphate)lysine" evidence="1">
    <location>
        <position position="265"/>
    </location>
</feature>
<accession>A8ETJ2</accession>
<sequence>MFGKSIEAYTKACEVIPGGVDSPVRAFKSVGGTPPFIKKGKGAYLYDVDGNKYVDFVQSWGPLIFGHCDKDIEKVVIKTAKKGLSFGAPTKLETKLASEIVEMYDNIDKVRFVSSGTEATMSAIRLARGVTGKNDIVKFEGCYHGHSDSLLVQAGSGLATFGSPSSPGVPSDLTKHTLLCEYNNIKNLEKCFADSSDIACIIIEPIAGNMGLVPASEEFLKACRELCDKHGALLIFDEVMSGFRASLTGASGIVKTKADIITFGKVIGAGMPVGAFAASKEIMSNLSPEGKIYQAGTLSGNPVAMAAGLKSLRKLKANPDIYDELNKKALRLVNGLKKIANKYEIPFQVDTRGSMFGFFFCEKEPKNFKDVGLCDFKRFATFHHEMLKKGFYFACSQYETGFICTKITNKDIDACLKAANEVMKNL</sequence>
<proteinExistence type="inferred from homology"/>
<evidence type="ECO:0000255" key="1">
    <source>
        <dbReference type="HAMAP-Rule" id="MF_00375"/>
    </source>
</evidence>
<keyword id="KW-0963">Cytoplasm</keyword>
<keyword id="KW-0413">Isomerase</keyword>
<keyword id="KW-0627">Porphyrin biosynthesis</keyword>
<keyword id="KW-0663">Pyridoxal phosphate</keyword>
<keyword id="KW-1185">Reference proteome</keyword>
<name>GSA_ALIB4</name>
<protein>
    <recommendedName>
        <fullName evidence="1">Glutamate-1-semialdehyde 2,1-aminomutase</fullName>
        <shortName evidence="1">GSA</shortName>
        <ecNumber evidence="1">5.4.3.8</ecNumber>
    </recommendedName>
    <alternativeName>
        <fullName evidence="1">Glutamate-1-semialdehyde aminotransferase</fullName>
        <shortName evidence="1">GSA-AT</shortName>
    </alternativeName>
</protein>